<name>ATPE_STRGC</name>
<organism>
    <name type="scientific">Streptococcus gordonii (strain Challis / ATCC 35105 / BCRC 15272 / CH1 / DL1 / V288)</name>
    <dbReference type="NCBI Taxonomy" id="467705"/>
    <lineage>
        <taxon>Bacteria</taxon>
        <taxon>Bacillati</taxon>
        <taxon>Bacillota</taxon>
        <taxon>Bacilli</taxon>
        <taxon>Lactobacillales</taxon>
        <taxon>Streptococcaceae</taxon>
        <taxon>Streptococcus</taxon>
    </lineage>
</organism>
<protein>
    <recommendedName>
        <fullName evidence="1">ATP synthase epsilon chain</fullName>
    </recommendedName>
    <alternativeName>
        <fullName evidence="1">ATP synthase F1 sector epsilon subunit</fullName>
    </alternativeName>
    <alternativeName>
        <fullName evidence="1">F-ATPase epsilon subunit</fullName>
    </alternativeName>
</protein>
<keyword id="KW-0066">ATP synthesis</keyword>
<keyword id="KW-1003">Cell membrane</keyword>
<keyword id="KW-0139">CF(1)</keyword>
<keyword id="KW-0375">Hydrogen ion transport</keyword>
<keyword id="KW-0406">Ion transport</keyword>
<keyword id="KW-0472">Membrane</keyword>
<keyword id="KW-1185">Reference proteome</keyword>
<keyword id="KW-0813">Transport</keyword>
<feature type="chain" id="PRO_1000081752" description="ATP synthase epsilon chain">
    <location>
        <begin position="1"/>
        <end position="138"/>
    </location>
</feature>
<gene>
    <name evidence="1" type="primary">atpC</name>
    <name type="ordered locus">SGO_1541</name>
</gene>
<sequence length="138" mass="15515">MAQMTVQIVTPDGLVYDHHAAFVSVKTIDGELGILPRHINTIAVLEVDQVKVRRVDDDKHIDWVAVNGGIIEIADNVITIVADSAERERDIDISRAERAKLRAEQEIEEAHDKHLIDQERRAKIALQRAINRINVGSK</sequence>
<accession>A8AYG0</accession>
<evidence type="ECO:0000255" key="1">
    <source>
        <dbReference type="HAMAP-Rule" id="MF_00530"/>
    </source>
</evidence>
<dbReference type="EMBL" id="CP000725">
    <property type="protein sequence ID" value="ABV10155.1"/>
    <property type="molecule type" value="Genomic_DNA"/>
</dbReference>
<dbReference type="SMR" id="A8AYG0"/>
<dbReference type="STRING" id="467705.SGO_1541"/>
<dbReference type="KEGG" id="sgo:SGO_1541"/>
<dbReference type="eggNOG" id="COG0355">
    <property type="taxonomic scope" value="Bacteria"/>
</dbReference>
<dbReference type="HOGENOM" id="CLU_084338_1_0_9"/>
<dbReference type="Proteomes" id="UP000001131">
    <property type="component" value="Chromosome"/>
</dbReference>
<dbReference type="GO" id="GO:0005886">
    <property type="term" value="C:plasma membrane"/>
    <property type="evidence" value="ECO:0007669"/>
    <property type="project" value="UniProtKB-SubCell"/>
</dbReference>
<dbReference type="GO" id="GO:0045259">
    <property type="term" value="C:proton-transporting ATP synthase complex"/>
    <property type="evidence" value="ECO:0007669"/>
    <property type="project" value="UniProtKB-KW"/>
</dbReference>
<dbReference type="GO" id="GO:0005524">
    <property type="term" value="F:ATP binding"/>
    <property type="evidence" value="ECO:0007669"/>
    <property type="project" value="UniProtKB-UniRule"/>
</dbReference>
<dbReference type="GO" id="GO:0046933">
    <property type="term" value="F:proton-transporting ATP synthase activity, rotational mechanism"/>
    <property type="evidence" value="ECO:0007669"/>
    <property type="project" value="UniProtKB-UniRule"/>
</dbReference>
<dbReference type="CDD" id="cd12152">
    <property type="entry name" value="F1-ATPase_delta"/>
    <property type="match status" value="1"/>
</dbReference>
<dbReference type="FunFam" id="1.20.5.440:FF:000001">
    <property type="entry name" value="ATP synthase epsilon chain"/>
    <property type="match status" value="1"/>
</dbReference>
<dbReference type="Gene3D" id="1.20.5.440">
    <property type="entry name" value="ATP synthase delta/epsilon subunit, C-terminal domain"/>
    <property type="match status" value="1"/>
</dbReference>
<dbReference type="Gene3D" id="2.60.15.10">
    <property type="entry name" value="F0F1 ATP synthase delta/epsilon subunit, N-terminal"/>
    <property type="match status" value="1"/>
</dbReference>
<dbReference type="HAMAP" id="MF_00530">
    <property type="entry name" value="ATP_synth_epsil_bac"/>
    <property type="match status" value="1"/>
</dbReference>
<dbReference type="InterPro" id="IPR001469">
    <property type="entry name" value="ATP_synth_F1_dsu/esu"/>
</dbReference>
<dbReference type="InterPro" id="IPR020546">
    <property type="entry name" value="ATP_synth_F1_dsu/esu_N"/>
</dbReference>
<dbReference type="InterPro" id="IPR020547">
    <property type="entry name" value="ATP_synth_F1_esu_C"/>
</dbReference>
<dbReference type="InterPro" id="IPR036771">
    <property type="entry name" value="ATPsynth_dsu/esu_N"/>
</dbReference>
<dbReference type="NCBIfam" id="TIGR01216">
    <property type="entry name" value="ATP_synt_epsi"/>
    <property type="match status" value="1"/>
</dbReference>
<dbReference type="NCBIfam" id="NF001846">
    <property type="entry name" value="PRK00571.1-3"/>
    <property type="match status" value="1"/>
</dbReference>
<dbReference type="PANTHER" id="PTHR13822">
    <property type="entry name" value="ATP SYNTHASE DELTA/EPSILON CHAIN"/>
    <property type="match status" value="1"/>
</dbReference>
<dbReference type="PANTHER" id="PTHR13822:SF10">
    <property type="entry name" value="ATP SYNTHASE EPSILON CHAIN, CHLOROPLASTIC"/>
    <property type="match status" value="1"/>
</dbReference>
<dbReference type="Pfam" id="PF00401">
    <property type="entry name" value="ATP-synt_DE"/>
    <property type="match status" value="1"/>
</dbReference>
<dbReference type="Pfam" id="PF02823">
    <property type="entry name" value="ATP-synt_DE_N"/>
    <property type="match status" value="1"/>
</dbReference>
<dbReference type="SUPFAM" id="SSF51344">
    <property type="entry name" value="Epsilon subunit of F1F0-ATP synthase N-terminal domain"/>
    <property type="match status" value="1"/>
</dbReference>
<proteinExistence type="inferred from homology"/>
<comment type="function">
    <text evidence="1">Produces ATP from ADP in the presence of a proton gradient across the membrane.</text>
</comment>
<comment type="subunit">
    <text evidence="1">F-type ATPases have 2 components, CF(1) - the catalytic core - and CF(0) - the membrane proton channel. CF(1) has five subunits: alpha(3), beta(3), gamma(1), delta(1), epsilon(1). CF(0) has three main subunits: a, b and c.</text>
</comment>
<comment type="subcellular location">
    <subcellularLocation>
        <location evidence="1">Cell membrane</location>
        <topology evidence="1">Peripheral membrane protein</topology>
    </subcellularLocation>
</comment>
<comment type="similarity">
    <text evidence="1">Belongs to the ATPase epsilon chain family.</text>
</comment>
<reference key="1">
    <citation type="journal article" date="2007" name="J. Bacteriol.">
        <title>Genome-wide transcriptional changes in Streptococcus gordonii in response to competence signaling peptide.</title>
        <authorList>
            <person name="Vickerman M.M."/>
            <person name="Iobst S."/>
            <person name="Jesionowski A.M."/>
            <person name="Gill S.R."/>
        </authorList>
    </citation>
    <scope>NUCLEOTIDE SEQUENCE [LARGE SCALE GENOMIC DNA]</scope>
    <source>
        <strain>Challis / ATCC 35105 / BCRC 15272 / CH1 / DL1 / V288</strain>
    </source>
</reference>